<gene>
    <name type="ordered locus">RP255</name>
</gene>
<keyword id="KW-1003">Cell membrane</keyword>
<keyword id="KW-0472">Membrane</keyword>
<keyword id="KW-1185">Reference proteome</keyword>
<keyword id="KW-0812">Transmembrane</keyword>
<keyword id="KW-1133">Transmembrane helix</keyword>
<proteinExistence type="predicted"/>
<organism>
    <name type="scientific">Rickettsia prowazekii (strain Madrid E)</name>
    <dbReference type="NCBI Taxonomy" id="272947"/>
    <lineage>
        <taxon>Bacteria</taxon>
        <taxon>Pseudomonadati</taxon>
        <taxon>Pseudomonadota</taxon>
        <taxon>Alphaproteobacteria</taxon>
        <taxon>Rickettsiales</taxon>
        <taxon>Rickettsiaceae</taxon>
        <taxon>Rickettsieae</taxon>
        <taxon>Rickettsia</taxon>
        <taxon>typhus group</taxon>
    </lineage>
</organism>
<comment type="subcellular location">
    <subcellularLocation>
        <location evidence="2">Cell membrane</location>
        <topology evidence="2">Multi-pass membrane protein</topology>
    </subcellularLocation>
</comment>
<dbReference type="EMBL" id="AJ235271">
    <property type="protein sequence ID" value="CAA14717.1"/>
    <property type="molecule type" value="Genomic_DNA"/>
</dbReference>
<dbReference type="PIR" id="C71680">
    <property type="entry name" value="C71680"/>
</dbReference>
<dbReference type="RefSeq" id="NP_220640.1">
    <property type="nucleotide sequence ID" value="NC_000963.1"/>
</dbReference>
<dbReference type="RefSeq" id="WP_010886247.1">
    <property type="nucleotide sequence ID" value="NC_000963.1"/>
</dbReference>
<dbReference type="SMR" id="Q9ZDS0"/>
<dbReference type="TCDB" id="2.A.1.64.2">
    <property type="family name" value="the major facilitator superfamily (mfs)"/>
</dbReference>
<dbReference type="EnsemblBacteria" id="CAA14717">
    <property type="protein sequence ID" value="CAA14717"/>
    <property type="gene ID" value="CAA14717"/>
</dbReference>
<dbReference type="KEGG" id="rpr:RP255"/>
<dbReference type="PATRIC" id="fig|272947.5.peg.262"/>
<dbReference type="HOGENOM" id="CLU_723366_0_0_5"/>
<dbReference type="OrthoDB" id="7161193at2"/>
<dbReference type="Proteomes" id="UP000002480">
    <property type="component" value="Chromosome"/>
</dbReference>
<dbReference type="GO" id="GO:0005886">
    <property type="term" value="C:plasma membrane"/>
    <property type="evidence" value="ECO:0007669"/>
    <property type="project" value="UniProtKB-SubCell"/>
</dbReference>
<dbReference type="Gene3D" id="1.20.1250.20">
    <property type="entry name" value="MFS general substrate transporter like domains"/>
    <property type="match status" value="1"/>
</dbReference>
<dbReference type="InterPro" id="IPR036259">
    <property type="entry name" value="MFS_trans_sf"/>
</dbReference>
<dbReference type="SUPFAM" id="SSF103473">
    <property type="entry name" value="MFS general substrate transporter"/>
    <property type="match status" value="1"/>
</dbReference>
<sequence>MTLKNDYKTIFFSLFGIFIFSCINAINFYNFKIFLLIKNLGGEQINNINQTKFIGSIIAGFSLIQLINKLSNKRIILISLSLLIICTINLIILNNYTLIKINFILINFGIFSYFTSRTLDIIEISKEKKYLFLACIILLWAGGNLMVDLLNPFIKPTNNTIVICALLYCINILTEFLHYNHTSHKLNLNSKFSSLIKNIELQLLTGFVVSYITLNILWYYEAFALKKQLALINLKLILKYIFLTICFAIIPICYILSKINKYFANLSLNIILLICFILLPIHGTNKNLNILYIILIGNCLGAIFICNILILIDKFQDYELRTALLSYFSMCSIGIYAGALSSHVPYGTIKGSDFLFSVFAVVGSFVTYHFWYFIQYKLYRF</sequence>
<feature type="chain" id="PRO_0000101343" description="Uncharacterized protein RP255">
    <location>
        <begin position="1"/>
        <end position="381"/>
    </location>
</feature>
<feature type="transmembrane region" description="Helical" evidence="1">
    <location>
        <begin position="10"/>
        <end position="29"/>
    </location>
</feature>
<feature type="transmembrane region" description="Helical" evidence="1">
    <location>
        <begin position="75"/>
        <end position="93"/>
    </location>
</feature>
<feature type="transmembrane region" description="Helical" evidence="1">
    <location>
        <begin position="98"/>
        <end position="117"/>
    </location>
</feature>
<feature type="transmembrane region" description="Helical" evidence="1">
    <location>
        <begin position="130"/>
        <end position="147"/>
    </location>
</feature>
<feature type="transmembrane region" description="Helical" evidence="1">
    <location>
        <begin position="157"/>
        <end position="179"/>
    </location>
</feature>
<feature type="transmembrane region" description="Helical" evidence="1">
    <location>
        <begin position="199"/>
        <end position="221"/>
    </location>
</feature>
<feature type="transmembrane region" description="Helical" evidence="1">
    <location>
        <begin position="236"/>
        <end position="255"/>
    </location>
</feature>
<feature type="transmembrane region" description="Helical" evidence="1">
    <location>
        <begin position="262"/>
        <end position="284"/>
    </location>
</feature>
<feature type="transmembrane region" description="Helical" evidence="1">
    <location>
        <begin position="289"/>
        <end position="311"/>
    </location>
</feature>
<feature type="transmembrane region" description="Helical" evidence="1">
    <location>
        <begin position="323"/>
        <end position="340"/>
    </location>
</feature>
<feature type="transmembrane region" description="Helical" evidence="1">
    <location>
        <begin position="355"/>
        <end position="374"/>
    </location>
</feature>
<reference key="1">
    <citation type="journal article" date="1998" name="Nature">
        <title>The genome sequence of Rickettsia prowazekii and the origin of mitochondria.</title>
        <authorList>
            <person name="Andersson S.G.E."/>
            <person name="Zomorodipour A."/>
            <person name="Andersson J.O."/>
            <person name="Sicheritz-Ponten T."/>
            <person name="Alsmark U.C.M."/>
            <person name="Podowski R.M."/>
            <person name="Naeslund A.K."/>
            <person name="Eriksson A.-S."/>
            <person name="Winkler H.H."/>
            <person name="Kurland C.G."/>
        </authorList>
    </citation>
    <scope>NUCLEOTIDE SEQUENCE [LARGE SCALE GENOMIC DNA]</scope>
    <source>
        <strain>Madrid E</strain>
    </source>
</reference>
<protein>
    <recommendedName>
        <fullName>Uncharacterized protein RP255</fullName>
    </recommendedName>
</protein>
<name>Y255_RICPR</name>
<evidence type="ECO:0000255" key="1"/>
<evidence type="ECO:0000305" key="2"/>
<accession>Q9ZDS0</accession>